<protein>
    <recommendedName>
        <fullName evidence="1">Uracil phosphoribosyltransferase</fullName>
        <ecNumber evidence="1">2.4.2.9</ecNumber>
    </recommendedName>
    <alternativeName>
        <fullName evidence="1">UMP pyrophosphorylase</fullName>
    </alternativeName>
    <alternativeName>
        <fullName evidence="1">UPRTase</fullName>
    </alternativeName>
</protein>
<proteinExistence type="inferred from homology"/>
<dbReference type="EC" id="2.4.2.9" evidence="1"/>
<dbReference type="EMBL" id="CP001074">
    <property type="protein sequence ID" value="ACE89236.1"/>
    <property type="molecule type" value="Genomic_DNA"/>
</dbReference>
<dbReference type="SMR" id="B3PXN0"/>
<dbReference type="KEGG" id="rec:RHECIAT_CH0000241"/>
<dbReference type="eggNOG" id="COG0035">
    <property type="taxonomic scope" value="Bacteria"/>
</dbReference>
<dbReference type="HOGENOM" id="CLU_067096_2_2_5"/>
<dbReference type="UniPathway" id="UPA00574">
    <property type="reaction ID" value="UER00636"/>
</dbReference>
<dbReference type="Proteomes" id="UP000008817">
    <property type="component" value="Chromosome"/>
</dbReference>
<dbReference type="GO" id="GO:0005525">
    <property type="term" value="F:GTP binding"/>
    <property type="evidence" value="ECO:0007669"/>
    <property type="project" value="UniProtKB-KW"/>
</dbReference>
<dbReference type="GO" id="GO:0000287">
    <property type="term" value="F:magnesium ion binding"/>
    <property type="evidence" value="ECO:0007669"/>
    <property type="project" value="UniProtKB-UniRule"/>
</dbReference>
<dbReference type="GO" id="GO:0004845">
    <property type="term" value="F:uracil phosphoribosyltransferase activity"/>
    <property type="evidence" value="ECO:0007669"/>
    <property type="project" value="UniProtKB-UniRule"/>
</dbReference>
<dbReference type="GO" id="GO:0044206">
    <property type="term" value="P:UMP salvage"/>
    <property type="evidence" value="ECO:0007669"/>
    <property type="project" value="UniProtKB-UniRule"/>
</dbReference>
<dbReference type="GO" id="GO:0006223">
    <property type="term" value="P:uracil salvage"/>
    <property type="evidence" value="ECO:0007669"/>
    <property type="project" value="InterPro"/>
</dbReference>
<dbReference type="CDD" id="cd06223">
    <property type="entry name" value="PRTases_typeI"/>
    <property type="match status" value="1"/>
</dbReference>
<dbReference type="FunFam" id="3.40.50.2020:FF:000003">
    <property type="entry name" value="Uracil phosphoribosyltransferase"/>
    <property type="match status" value="1"/>
</dbReference>
<dbReference type="Gene3D" id="3.40.50.2020">
    <property type="match status" value="1"/>
</dbReference>
<dbReference type="HAMAP" id="MF_01218_B">
    <property type="entry name" value="Upp_B"/>
    <property type="match status" value="1"/>
</dbReference>
<dbReference type="InterPro" id="IPR000836">
    <property type="entry name" value="PRibTrfase_dom"/>
</dbReference>
<dbReference type="InterPro" id="IPR029057">
    <property type="entry name" value="PRTase-like"/>
</dbReference>
<dbReference type="InterPro" id="IPR034332">
    <property type="entry name" value="Upp_B"/>
</dbReference>
<dbReference type="InterPro" id="IPR050054">
    <property type="entry name" value="UPRTase/APRTase"/>
</dbReference>
<dbReference type="InterPro" id="IPR005765">
    <property type="entry name" value="Ura_phspho_trans"/>
</dbReference>
<dbReference type="NCBIfam" id="NF001097">
    <property type="entry name" value="PRK00129.1"/>
    <property type="match status" value="1"/>
</dbReference>
<dbReference type="NCBIfam" id="TIGR01091">
    <property type="entry name" value="upp"/>
    <property type="match status" value="1"/>
</dbReference>
<dbReference type="PANTHER" id="PTHR32315">
    <property type="entry name" value="ADENINE PHOSPHORIBOSYLTRANSFERASE"/>
    <property type="match status" value="1"/>
</dbReference>
<dbReference type="PANTHER" id="PTHR32315:SF4">
    <property type="entry name" value="URACIL PHOSPHORIBOSYLTRANSFERASE, CHLOROPLASTIC"/>
    <property type="match status" value="1"/>
</dbReference>
<dbReference type="Pfam" id="PF14681">
    <property type="entry name" value="UPRTase"/>
    <property type="match status" value="1"/>
</dbReference>
<dbReference type="SUPFAM" id="SSF53271">
    <property type="entry name" value="PRTase-like"/>
    <property type="match status" value="1"/>
</dbReference>
<accession>B3PXN0</accession>
<feature type="chain" id="PRO_1000139151" description="Uracil phosphoribosyltransferase">
    <location>
        <begin position="1"/>
        <end position="209"/>
    </location>
</feature>
<feature type="binding site" evidence="1">
    <location>
        <position position="79"/>
    </location>
    <ligand>
        <name>5-phospho-alpha-D-ribose 1-diphosphate</name>
        <dbReference type="ChEBI" id="CHEBI:58017"/>
    </ligand>
</feature>
<feature type="binding site" evidence="1">
    <location>
        <position position="104"/>
    </location>
    <ligand>
        <name>5-phospho-alpha-D-ribose 1-diphosphate</name>
        <dbReference type="ChEBI" id="CHEBI:58017"/>
    </ligand>
</feature>
<feature type="binding site" evidence="1">
    <location>
        <begin position="131"/>
        <end position="139"/>
    </location>
    <ligand>
        <name>5-phospho-alpha-D-ribose 1-diphosphate</name>
        <dbReference type="ChEBI" id="CHEBI:58017"/>
    </ligand>
</feature>
<feature type="binding site" evidence="1">
    <location>
        <position position="194"/>
    </location>
    <ligand>
        <name>uracil</name>
        <dbReference type="ChEBI" id="CHEBI:17568"/>
    </ligand>
</feature>
<feature type="binding site" evidence="1">
    <location>
        <begin position="199"/>
        <end position="201"/>
    </location>
    <ligand>
        <name>uracil</name>
        <dbReference type="ChEBI" id="CHEBI:17568"/>
    </ligand>
</feature>
<feature type="binding site" evidence="1">
    <location>
        <position position="200"/>
    </location>
    <ligand>
        <name>5-phospho-alpha-D-ribose 1-diphosphate</name>
        <dbReference type="ChEBI" id="CHEBI:58017"/>
    </ligand>
</feature>
<evidence type="ECO:0000255" key="1">
    <source>
        <dbReference type="HAMAP-Rule" id="MF_01218"/>
    </source>
</evidence>
<reference key="1">
    <citation type="journal article" date="2010" name="Appl. Environ. Microbiol.">
        <title>Conserved symbiotic plasmid DNA sequences in the multireplicon pangenomic structure of Rhizobium etli.</title>
        <authorList>
            <person name="Gonzalez V."/>
            <person name="Acosta J.L."/>
            <person name="Santamaria R.I."/>
            <person name="Bustos P."/>
            <person name="Fernandez J.L."/>
            <person name="Hernandez Gonzalez I.L."/>
            <person name="Diaz R."/>
            <person name="Flores M."/>
            <person name="Palacios R."/>
            <person name="Mora J."/>
            <person name="Davila G."/>
        </authorList>
    </citation>
    <scope>NUCLEOTIDE SEQUENCE [LARGE SCALE GENOMIC DNA]</scope>
    <source>
        <strain>CIAT 652</strain>
    </source>
</reference>
<keyword id="KW-0021">Allosteric enzyme</keyword>
<keyword id="KW-0328">Glycosyltransferase</keyword>
<keyword id="KW-0342">GTP-binding</keyword>
<keyword id="KW-0460">Magnesium</keyword>
<keyword id="KW-0547">Nucleotide-binding</keyword>
<keyword id="KW-0808">Transferase</keyword>
<sequence>MDGVTVIDHPLVQHKLTIMRRKETSTGSFRRLLREISTLLCYEVTRDLELTMETIETPLQTIESPILEGKKLVFASILRAGNGLLEGMLDLVPSARVSHIGVYRDHETLQPVEYYFKAPEDVAERLIIVVDPMLATGNSSIAAIDKLKERGAHNIRFLCLLAAPEGIRNFRAAHPDVPVFTAAIDSHLNEKGYIVPGLGDAGDRMYGTK</sequence>
<comment type="function">
    <text evidence="1">Catalyzes the conversion of uracil and 5-phospho-alpha-D-ribose 1-diphosphate (PRPP) to UMP and diphosphate.</text>
</comment>
<comment type="catalytic activity">
    <reaction evidence="1">
        <text>UMP + diphosphate = 5-phospho-alpha-D-ribose 1-diphosphate + uracil</text>
        <dbReference type="Rhea" id="RHEA:13017"/>
        <dbReference type="ChEBI" id="CHEBI:17568"/>
        <dbReference type="ChEBI" id="CHEBI:33019"/>
        <dbReference type="ChEBI" id="CHEBI:57865"/>
        <dbReference type="ChEBI" id="CHEBI:58017"/>
        <dbReference type="EC" id="2.4.2.9"/>
    </reaction>
</comment>
<comment type="cofactor">
    <cofactor evidence="1">
        <name>Mg(2+)</name>
        <dbReference type="ChEBI" id="CHEBI:18420"/>
    </cofactor>
    <text evidence="1">Binds 1 Mg(2+) ion per subunit. The magnesium is bound as Mg-PRPP.</text>
</comment>
<comment type="activity regulation">
    <text evidence="1">Allosterically activated by GTP.</text>
</comment>
<comment type="pathway">
    <text evidence="1">Pyrimidine metabolism; UMP biosynthesis via salvage pathway; UMP from uracil: step 1/1.</text>
</comment>
<comment type="similarity">
    <text evidence="1">Belongs to the UPRTase family.</text>
</comment>
<gene>
    <name evidence="1" type="primary">upp</name>
    <name type="ordered locus">RHECIAT_CH0000241</name>
</gene>
<organism>
    <name type="scientific">Rhizobium etli (strain CIAT 652)</name>
    <dbReference type="NCBI Taxonomy" id="491916"/>
    <lineage>
        <taxon>Bacteria</taxon>
        <taxon>Pseudomonadati</taxon>
        <taxon>Pseudomonadota</taxon>
        <taxon>Alphaproteobacteria</taxon>
        <taxon>Hyphomicrobiales</taxon>
        <taxon>Rhizobiaceae</taxon>
        <taxon>Rhizobium/Agrobacterium group</taxon>
        <taxon>Rhizobium</taxon>
    </lineage>
</organism>
<name>UPP_RHIE6</name>